<feature type="chain" id="PRO_0000408659" description="Probable endonuclease LCL3">
    <location>
        <begin position="1"/>
        <end position="235"/>
    </location>
</feature>
<feature type="transmembrane region" description="Helical" evidence="2">
    <location>
        <begin position="11"/>
        <end position="33"/>
    </location>
</feature>
<feature type="domain" description="TNase-like" evidence="3">
    <location>
        <begin position="58"/>
        <end position="216"/>
    </location>
</feature>
<feature type="active site" evidence="3">
    <location>
        <position position="107"/>
    </location>
</feature>
<feature type="active site" evidence="3">
    <location>
        <position position="115"/>
    </location>
</feature>
<feature type="active site" evidence="3">
    <location>
        <position position="155"/>
    </location>
</feature>
<feature type="binding site" evidence="3">
    <location>
        <position position="112"/>
    </location>
    <ligand>
        <name>Ca(2+)</name>
        <dbReference type="ChEBI" id="CHEBI:29108"/>
    </ligand>
</feature>
<dbReference type="EC" id="3.1.-.-"/>
<dbReference type="EMBL" id="CR382136">
    <property type="protein sequence ID" value="CAG86820.2"/>
    <property type="molecule type" value="Genomic_DNA"/>
</dbReference>
<dbReference type="RefSeq" id="XP_458681.2">
    <property type="nucleotide sequence ID" value="XM_458681.1"/>
</dbReference>
<dbReference type="SMR" id="Q6BSY9"/>
<dbReference type="FunCoup" id="Q6BSY9">
    <property type="interactions" value="18"/>
</dbReference>
<dbReference type="STRING" id="284592.Q6BSY9"/>
<dbReference type="GeneID" id="2901123"/>
<dbReference type="KEGG" id="dha:DEHA2D04950g"/>
<dbReference type="VEuPathDB" id="FungiDB:DEHA2D04950g"/>
<dbReference type="eggNOG" id="ENOG502S1U4">
    <property type="taxonomic scope" value="Eukaryota"/>
</dbReference>
<dbReference type="HOGENOM" id="CLU_046484_0_1_1"/>
<dbReference type="InParanoid" id="Q6BSY9"/>
<dbReference type="OMA" id="IYHTPGG"/>
<dbReference type="OrthoDB" id="430293at2759"/>
<dbReference type="Proteomes" id="UP000000599">
    <property type="component" value="Chromosome D"/>
</dbReference>
<dbReference type="GO" id="GO:0016020">
    <property type="term" value="C:membrane"/>
    <property type="evidence" value="ECO:0007669"/>
    <property type="project" value="UniProtKB-SubCell"/>
</dbReference>
<dbReference type="GO" id="GO:0005739">
    <property type="term" value="C:mitochondrion"/>
    <property type="evidence" value="ECO:0007669"/>
    <property type="project" value="UniProtKB-SubCell"/>
</dbReference>
<dbReference type="GO" id="GO:0004519">
    <property type="term" value="F:endonuclease activity"/>
    <property type="evidence" value="ECO:0007669"/>
    <property type="project" value="UniProtKB-KW"/>
</dbReference>
<dbReference type="GO" id="GO:0046872">
    <property type="term" value="F:metal ion binding"/>
    <property type="evidence" value="ECO:0007669"/>
    <property type="project" value="UniProtKB-KW"/>
</dbReference>
<dbReference type="FunFam" id="2.40.50.90:FF:000035">
    <property type="entry name" value="Probable endonuclease LCL3"/>
    <property type="match status" value="1"/>
</dbReference>
<dbReference type="Gene3D" id="2.40.50.90">
    <property type="match status" value="1"/>
</dbReference>
<dbReference type="InterPro" id="IPR035437">
    <property type="entry name" value="SNase_OB-fold_sf"/>
</dbReference>
<dbReference type="InterPro" id="IPR016071">
    <property type="entry name" value="Staphylococal_nuclease_OB-fold"/>
</dbReference>
<dbReference type="PANTHER" id="PTHR12302">
    <property type="entry name" value="EBNA2 BINDING PROTEIN P100"/>
    <property type="match status" value="1"/>
</dbReference>
<dbReference type="PANTHER" id="PTHR12302:SF3">
    <property type="entry name" value="SERINE_THREONINE-PROTEIN KINASE 31"/>
    <property type="match status" value="1"/>
</dbReference>
<dbReference type="Pfam" id="PF00565">
    <property type="entry name" value="SNase"/>
    <property type="match status" value="1"/>
</dbReference>
<dbReference type="SMART" id="SM00318">
    <property type="entry name" value="SNc"/>
    <property type="match status" value="1"/>
</dbReference>
<dbReference type="SUPFAM" id="SSF50199">
    <property type="entry name" value="Staphylococcal nuclease"/>
    <property type="match status" value="1"/>
</dbReference>
<dbReference type="PROSITE" id="PS50830">
    <property type="entry name" value="TNASE_3"/>
    <property type="match status" value="1"/>
</dbReference>
<proteinExistence type="inferred from homology"/>
<name>LCL3_DEBHA</name>
<organism>
    <name type="scientific">Debaryomyces hansenii (strain ATCC 36239 / CBS 767 / BCRC 21394 / JCM 1990 / NBRC 0083 / IGC 2968)</name>
    <name type="common">Yeast</name>
    <name type="synonym">Torulaspora hansenii</name>
    <dbReference type="NCBI Taxonomy" id="284592"/>
    <lineage>
        <taxon>Eukaryota</taxon>
        <taxon>Fungi</taxon>
        <taxon>Dikarya</taxon>
        <taxon>Ascomycota</taxon>
        <taxon>Saccharomycotina</taxon>
        <taxon>Pichiomycetes</taxon>
        <taxon>Debaryomycetaceae</taxon>
        <taxon>Debaryomyces</taxon>
    </lineage>
</organism>
<accession>Q6BSY9</accession>
<sequence>MPPIPSEPENISLIHPKVLLLSAGVTTSLFLSYKFYKRYVRRIRNYLDLTPEILDRQTPLYGRVTRVGDGDNFRFYHTPGGILFGWGWLRHVPTKRQELKDETLMVRLCGVDAPERAHWGKPAQPYSEEALAWLKNYIFGRNVVVTPYSIDQYKRLVGRAQVWKWTGKKDISAEMLRNGLGVVYEGKIGAEFGDNESWYRKLEARAKWLRRGLWSLGSSMTTPGEFKKVHYRGDS</sequence>
<gene>
    <name type="primary">LCL3</name>
    <name type="ordered locus">DEHA2D04950g</name>
</gene>
<comment type="subcellular location">
    <subcellularLocation>
        <location>Mitochondrion</location>
    </subcellularLocation>
    <subcellularLocation>
        <location evidence="1">Membrane</location>
        <topology evidence="1">Single-pass membrane protein</topology>
    </subcellularLocation>
</comment>
<comment type="similarity">
    <text evidence="4">Belongs to the LCL3 family.</text>
</comment>
<protein>
    <recommendedName>
        <fullName>Probable endonuclease LCL3</fullName>
        <ecNumber>3.1.-.-</ecNumber>
    </recommendedName>
</protein>
<keyword id="KW-0106">Calcium</keyword>
<keyword id="KW-0255">Endonuclease</keyword>
<keyword id="KW-0378">Hydrolase</keyword>
<keyword id="KW-0472">Membrane</keyword>
<keyword id="KW-0479">Metal-binding</keyword>
<keyword id="KW-0496">Mitochondrion</keyword>
<keyword id="KW-0540">Nuclease</keyword>
<keyword id="KW-1185">Reference proteome</keyword>
<keyword id="KW-0812">Transmembrane</keyword>
<keyword id="KW-1133">Transmembrane helix</keyword>
<evidence type="ECO:0000250" key="1"/>
<evidence type="ECO:0000255" key="2"/>
<evidence type="ECO:0000255" key="3">
    <source>
        <dbReference type="PROSITE-ProRule" id="PRU00272"/>
    </source>
</evidence>
<evidence type="ECO:0000305" key="4"/>
<reference key="1">
    <citation type="journal article" date="2004" name="Nature">
        <title>Genome evolution in yeasts.</title>
        <authorList>
            <person name="Dujon B."/>
            <person name="Sherman D."/>
            <person name="Fischer G."/>
            <person name="Durrens P."/>
            <person name="Casaregola S."/>
            <person name="Lafontaine I."/>
            <person name="de Montigny J."/>
            <person name="Marck C."/>
            <person name="Neuveglise C."/>
            <person name="Talla E."/>
            <person name="Goffard N."/>
            <person name="Frangeul L."/>
            <person name="Aigle M."/>
            <person name="Anthouard V."/>
            <person name="Babour A."/>
            <person name="Barbe V."/>
            <person name="Barnay S."/>
            <person name="Blanchin S."/>
            <person name="Beckerich J.-M."/>
            <person name="Beyne E."/>
            <person name="Bleykasten C."/>
            <person name="Boisrame A."/>
            <person name="Boyer J."/>
            <person name="Cattolico L."/>
            <person name="Confanioleri F."/>
            <person name="de Daruvar A."/>
            <person name="Despons L."/>
            <person name="Fabre E."/>
            <person name="Fairhead C."/>
            <person name="Ferry-Dumazet H."/>
            <person name="Groppi A."/>
            <person name="Hantraye F."/>
            <person name="Hennequin C."/>
            <person name="Jauniaux N."/>
            <person name="Joyet P."/>
            <person name="Kachouri R."/>
            <person name="Kerrest A."/>
            <person name="Koszul R."/>
            <person name="Lemaire M."/>
            <person name="Lesur I."/>
            <person name="Ma L."/>
            <person name="Muller H."/>
            <person name="Nicaud J.-M."/>
            <person name="Nikolski M."/>
            <person name="Oztas S."/>
            <person name="Ozier-Kalogeropoulos O."/>
            <person name="Pellenz S."/>
            <person name="Potier S."/>
            <person name="Richard G.-F."/>
            <person name="Straub M.-L."/>
            <person name="Suleau A."/>
            <person name="Swennen D."/>
            <person name="Tekaia F."/>
            <person name="Wesolowski-Louvel M."/>
            <person name="Westhof E."/>
            <person name="Wirth B."/>
            <person name="Zeniou-Meyer M."/>
            <person name="Zivanovic Y."/>
            <person name="Bolotin-Fukuhara M."/>
            <person name="Thierry A."/>
            <person name="Bouchier C."/>
            <person name="Caudron B."/>
            <person name="Scarpelli C."/>
            <person name="Gaillardin C."/>
            <person name="Weissenbach J."/>
            <person name="Wincker P."/>
            <person name="Souciet J.-L."/>
        </authorList>
    </citation>
    <scope>NUCLEOTIDE SEQUENCE [LARGE SCALE GENOMIC DNA]</scope>
    <source>
        <strain>ATCC 36239 / CBS 767 / BCRC 21394 / JCM 1990 / NBRC 0083 / IGC 2968</strain>
    </source>
</reference>